<keyword id="KW-0007">Acetylation</keyword>
<keyword id="KW-0049">Antioxidant</keyword>
<keyword id="KW-0963">Cytoplasm</keyword>
<keyword id="KW-1015">Disulfide bond</keyword>
<keyword id="KW-0560">Oxidoreductase</keyword>
<keyword id="KW-0575">Peroxidase</keyword>
<keyword id="KW-0597">Phosphoprotein</keyword>
<keyword id="KW-0676">Redox-active center</keyword>
<keyword id="KW-1185">Reference proteome</keyword>
<protein>
    <recommendedName>
        <fullName>Peroxiredoxin-2</fullName>
        <ecNumber evidence="1">1.11.1.24</ecNumber>
    </recommendedName>
    <alternativeName>
        <fullName evidence="4">Thioredoxin-dependent peroxiredoxin 2</fullName>
    </alternativeName>
</protein>
<sequence>MASGNARIGKPAPDFKATAVVDGAFKEVKLSDYKGKYVVLFFYPLDFTFVCPTEIIAFSNRAEDFRKLGCEVLGVSVDSQFTHLAWINTPRKEGGLGPLNIPLLADVTRRLSEDYGVLKTDEGIAYRGLFIIDGKGVLRQITVNDLPVGRSVDEALRLVQAFQYTDEHGEVCPAGWKPGSDTIKPNVDDSKEYFSKHN</sequence>
<feature type="initiator methionine" description="Removed" evidence="1">
    <location>
        <position position="1"/>
    </location>
</feature>
<feature type="chain" id="PRO_0000256856" description="Peroxiredoxin-2">
    <location>
        <begin position="2"/>
        <end position="198"/>
    </location>
</feature>
<feature type="domain" description="Thioredoxin" evidence="3">
    <location>
        <begin position="6"/>
        <end position="164"/>
    </location>
</feature>
<feature type="active site" description="Cysteine sulfenic acid (-SOH) intermediate" evidence="1">
    <location>
        <position position="51"/>
    </location>
</feature>
<feature type="modified residue" description="N-acetylalanine" evidence="1">
    <location>
        <position position="2"/>
    </location>
</feature>
<feature type="modified residue" description="Phosphoserine" evidence="1">
    <location>
        <position position="112"/>
    </location>
</feature>
<feature type="modified residue" description="Phosphothreonine" evidence="1">
    <location>
        <position position="182"/>
    </location>
</feature>
<feature type="modified residue" description="N6-acetyllysine" evidence="1">
    <location>
        <position position="196"/>
    </location>
</feature>
<feature type="disulfide bond" description="Interchain (with C-172); in linked form" evidence="1">
    <location>
        <position position="51"/>
    </location>
</feature>
<feature type="disulfide bond" description="Interchain (with C-51); in linked form" evidence="1">
    <location>
        <position position="172"/>
    </location>
</feature>
<evidence type="ECO:0000250" key="1">
    <source>
        <dbReference type="UniProtKB" id="P32119"/>
    </source>
</evidence>
<evidence type="ECO:0000250" key="2">
    <source>
        <dbReference type="UniProtKB" id="Q06830"/>
    </source>
</evidence>
<evidence type="ECO:0000255" key="3">
    <source>
        <dbReference type="PROSITE-ProRule" id="PRU00691"/>
    </source>
</evidence>
<evidence type="ECO:0000305" key="4"/>
<proteinExistence type="evidence at transcript level"/>
<dbReference type="EC" id="1.11.1.24" evidence="1"/>
<dbReference type="EMBL" id="AB220444">
    <property type="protein sequence ID" value="BAE72977.1"/>
    <property type="molecule type" value="mRNA"/>
</dbReference>
<dbReference type="RefSeq" id="XP_045236146.1">
    <property type="nucleotide sequence ID" value="XM_045380211.2"/>
</dbReference>
<dbReference type="SMR" id="Q2PFZ3"/>
<dbReference type="STRING" id="9541.ENSMFAP00000016916"/>
<dbReference type="PeroxiBase" id="4482">
    <property type="entry name" value="Mfa2CysPrx02"/>
</dbReference>
<dbReference type="Ensembl" id="ENSMFAT00000067500.2">
    <property type="protein sequence ID" value="ENSMFAP00000016962.2"/>
    <property type="gene ID" value="ENSMFAG00000031614.2"/>
</dbReference>
<dbReference type="GeneID" id="102146129"/>
<dbReference type="VEuPathDB" id="HostDB:ENSMFAG00000031614"/>
<dbReference type="eggNOG" id="KOG0852">
    <property type="taxonomic scope" value="Eukaryota"/>
</dbReference>
<dbReference type="GeneTree" id="ENSGT00940000155828"/>
<dbReference type="OMA" id="VCTKELC"/>
<dbReference type="Proteomes" id="UP000233100">
    <property type="component" value="Chromosome 19"/>
</dbReference>
<dbReference type="Bgee" id="ENSMFAG00000031614">
    <property type="expression patterns" value="Expressed in bone marrow and 13 other cell types or tissues"/>
</dbReference>
<dbReference type="GO" id="GO:0005829">
    <property type="term" value="C:cytosol"/>
    <property type="evidence" value="ECO:0007669"/>
    <property type="project" value="TreeGrafter"/>
</dbReference>
<dbReference type="GO" id="GO:0008379">
    <property type="term" value="F:thioredoxin peroxidase activity"/>
    <property type="evidence" value="ECO:0007669"/>
    <property type="project" value="TreeGrafter"/>
</dbReference>
<dbReference type="GO" id="GO:0045454">
    <property type="term" value="P:cell redox homeostasis"/>
    <property type="evidence" value="ECO:0007669"/>
    <property type="project" value="TreeGrafter"/>
</dbReference>
<dbReference type="GO" id="GO:0042744">
    <property type="term" value="P:hydrogen peroxide catabolic process"/>
    <property type="evidence" value="ECO:0007669"/>
    <property type="project" value="TreeGrafter"/>
</dbReference>
<dbReference type="GO" id="GO:0045321">
    <property type="term" value="P:leukocyte activation"/>
    <property type="evidence" value="ECO:0007669"/>
    <property type="project" value="TreeGrafter"/>
</dbReference>
<dbReference type="GO" id="GO:0019430">
    <property type="term" value="P:removal of superoxide radicals"/>
    <property type="evidence" value="ECO:0007669"/>
    <property type="project" value="TreeGrafter"/>
</dbReference>
<dbReference type="CDD" id="cd03015">
    <property type="entry name" value="PRX_Typ2cys"/>
    <property type="match status" value="1"/>
</dbReference>
<dbReference type="FunFam" id="3.40.30.10:FF:000003">
    <property type="entry name" value="Peroxiredoxin 1"/>
    <property type="match status" value="1"/>
</dbReference>
<dbReference type="Gene3D" id="3.40.30.10">
    <property type="entry name" value="Glutaredoxin"/>
    <property type="match status" value="1"/>
</dbReference>
<dbReference type="InterPro" id="IPR000866">
    <property type="entry name" value="AhpC/TSA"/>
</dbReference>
<dbReference type="InterPro" id="IPR050217">
    <property type="entry name" value="Peroxiredoxin"/>
</dbReference>
<dbReference type="InterPro" id="IPR024706">
    <property type="entry name" value="Peroxiredoxin_AhpC-typ"/>
</dbReference>
<dbReference type="InterPro" id="IPR019479">
    <property type="entry name" value="Peroxiredoxin_C"/>
</dbReference>
<dbReference type="InterPro" id="IPR036249">
    <property type="entry name" value="Thioredoxin-like_sf"/>
</dbReference>
<dbReference type="InterPro" id="IPR013766">
    <property type="entry name" value="Thioredoxin_domain"/>
</dbReference>
<dbReference type="PANTHER" id="PTHR10681:SF161">
    <property type="entry name" value="PEROXIREDOXIN-2"/>
    <property type="match status" value="1"/>
</dbReference>
<dbReference type="PANTHER" id="PTHR10681">
    <property type="entry name" value="THIOREDOXIN PEROXIDASE"/>
    <property type="match status" value="1"/>
</dbReference>
<dbReference type="Pfam" id="PF10417">
    <property type="entry name" value="1-cysPrx_C"/>
    <property type="match status" value="1"/>
</dbReference>
<dbReference type="Pfam" id="PF00578">
    <property type="entry name" value="AhpC-TSA"/>
    <property type="match status" value="1"/>
</dbReference>
<dbReference type="PIRSF" id="PIRSF000239">
    <property type="entry name" value="AHPC"/>
    <property type="match status" value="1"/>
</dbReference>
<dbReference type="SUPFAM" id="SSF52833">
    <property type="entry name" value="Thioredoxin-like"/>
    <property type="match status" value="1"/>
</dbReference>
<dbReference type="PROSITE" id="PS51352">
    <property type="entry name" value="THIOREDOXIN_2"/>
    <property type="match status" value="1"/>
</dbReference>
<accession>Q2PFZ3</accession>
<name>PRDX2_MACFA</name>
<reference key="1">
    <citation type="submission" date="2005-07" db="EMBL/GenBank/DDBJ databases">
        <title>Analysis of gene expression in cynomolgus monkey tissues by macaque cDNA oligo-chips.</title>
        <authorList>
            <person name="Kobayashi M."/>
            <person name="Tanuma R."/>
            <person name="Hirata M."/>
            <person name="Osada N."/>
            <person name="Kusuda J."/>
            <person name="Sugano S."/>
            <person name="Hashimoto K."/>
        </authorList>
    </citation>
    <scope>NUCLEOTIDE SEQUENCE [LARGE SCALE MRNA]</scope>
    <source>
        <tissue>Brain cortex</tissue>
    </source>
</reference>
<comment type="function">
    <text evidence="1">Thiol-specific peroxidase that catalyzes the reduction of hydrogen peroxide and organic hydroperoxides to water and alcohols, respectively. Plays a role in cell protection against oxidative stress by detoxifying peroxides and as sensor of hydrogen peroxide-mediated signaling events. Might participate in the signaling cascades of growth factors and tumor necrosis factor-alpha by regulating the intracellular concentrations of H(2)O(2).</text>
</comment>
<comment type="catalytic activity">
    <reaction evidence="1">
        <text>a hydroperoxide + [thioredoxin]-dithiol = an alcohol + [thioredoxin]-disulfide + H2O</text>
        <dbReference type="Rhea" id="RHEA:62620"/>
        <dbReference type="Rhea" id="RHEA-COMP:10698"/>
        <dbReference type="Rhea" id="RHEA-COMP:10700"/>
        <dbReference type="ChEBI" id="CHEBI:15377"/>
        <dbReference type="ChEBI" id="CHEBI:29950"/>
        <dbReference type="ChEBI" id="CHEBI:30879"/>
        <dbReference type="ChEBI" id="CHEBI:35924"/>
        <dbReference type="ChEBI" id="CHEBI:50058"/>
        <dbReference type="EC" id="1.11.1.24"/>
    </reaction>
</comment>
<comment type="subunit">
    <text evidence="1">Homodimer; disulfide-linked, upon oxidation. 5 homodimers assemble to form a ring-like decamer. Interacts with TIPIN.</text>
</comment>
<comment type="subcellular location">
    <subcellularLocation>
        <location evidence="1">Cytoplasm</location>
    </subcellularLocation>
</comment>
<comment type="PTM">
    <text evidence="1 2">The enzyme can be inactivated by further oxidation of the cysteine sulfenic acid (C(P)-SOH) to sulphinic acid (C(P)-SO2H) instead of its condensation to a disulfide bond. It can be reactivated by forming a transient disulfide bond with sulfiredoxin SRXN1, which reduces the cysteine sulfinic acid in an ATP- and Mg-dependent manner.</text>
</comment>
<comment type="PTM">
    <text evidence="1">Acetylation increases resistance to transition to high molecular-mass complexes. Deacetylated by HDAC6 which decreases reducing activity.</text>
</comment>
<comment type="miscellaneous">
    <text evidence="1">The active site is a conserved redox-active cysteine residue, the peroxidatic cysteine (C(P)), which makes the nucleophilic attack on the peroxide substrate. The peroxide oxidizes the C(P)-SH to cysteine sulfenic acid (C(P)-SOH), which then reacts with another cysteine residue, the resolving cysteine (C(R)), to form a disulfide bridge. The disulfide is subsequently reduced by an appropriate electron donor to complete the catalytic cycle. In this typical 2-Cys peroxiredoxin, C(R) is provided by the other dimeric subunit to form an intersubunit disulfide. The disulfide is subsequently reduced by thioredoxin.</text>
</comment>
<comment type="similarity">
    <text evidence="4">Belongs to the peroxiredoxin family. AhpC/Prx1 subfamily.</text>
</comment>
<gene>
    <name type="primary">PRDX2</name>
    <name type="ORF">QccE-19689</name>
</gene>
<organism>
    <name type="scientific">Macaca fascicularis</name>
    <name type="common">Crab-eating macaque</name>
    <name type="synonym">Cynomolgus monkey</name>
    <dbReference type="NCBI Taxonomy" id="9541"/>
    <lineage>
        <taxon>Eukaryota</taxon>
        <taxon>Metazoa</taxon>
        <taxon>Chordata</taxon>
        <taxon>Craniata</taxon>
        <taxon>Vertebrata</taxon>
        <taxon>Euteleostomi</taxon>
        <taxon>Mammalia</taxon>
        <taxon>Eutheria</taxon>
        <taxon>Euarchontoglires</taxon>
        <taxon>Primates</taxon>
        <taxon>Haplorrhini</taxon>
        <taxon>Catarrhini</taxon>
        <taxon>Cercopithecidae</taxon>
        <taxon>Cercopithecinae</taxon>
        <taxon>Macaca</taxon>
    </lineage>
</organism>